<accession>Q5RAV2</accession>
<reference key="1">
    <citation type="submission" date="2004-11" db="EMBL/GenBank/DDBJ databases">
        <authorList>
            <consortium name="The German cDNA consortium"/>
        </authorList>
    </citation>
    <scope>NUCLEOTIDE SEQUENCE [LARGE SCALE MRNA]</scope>
    <source>
        <tissue>Heart</tissue>
    </source>
</reference>
<dbReference type="EMBL" id="CR858910">
    <property type="protein sequence ID" value="CAH91108.1"/>
    <property type="molecule type" value="mRNA"/>
</dbReference>
<dbReference type="RefSeq" id="NP_001125647.1">
    <property type="nucleotide sequence ID" value="NM_001132175.1"/>
</dbReference>
<dbReference type="SMR" id="Q5RAV2"/>
<dbReference type="FunCoup" id="Q5RAV2">
    <property type="interactions" value="1595"/>
</dbReference>
<dbReference type="STRING" id="9601.ENSPPYP00000015247"/>
<dbReference type="GeneID" id="100172566"/>
<dbReference type="KEGG" id="pon:100172566"/>
<dbReference type="CTD" id="25978"/>
<dbReference type="eggNOG" id="KOG3231">
    <property type="taxonomic scope" value="Eukaryota"/>
</dbReference>
<dbReference type="InParanoid" id="Q5RAV2"/>
<dbReference type="OrthoDB" id="5594417at2759"/>
<dbReference type="Proteomes" id="UP000001595">
    <property type="component" value="Unplaced"/>
</dbReference>
<dbReference type="GO" id="GO:1904930">
    <property type="term" value="C:amphisome membrane"/>
    <property type="evidence" value="ECO:0007669"/>
    <property type="project" value="UniProtKB-ARBA"/>
</dbReference>
<dbReference type="GO" id="GO:0005829">
    <property type="term" value="C:cytosol"/>
    <property type="evidence" value="ECO:0007669"/>
    <property type="project" value="UniProtKB-SubCell"/>
</dbReference>
<dbReference type="GO" id="GO:0000776">
    <property type="term" value="C:kinetochore"/>
    <property type="evidence" value="ECO:0007669"/>
    <property type="project" value="UniProtKB-ARBA"/>
</dbReference>
<dbReference type="GO" id="GO:0005828">
    <property type="term" value="C:kinetochore microtubule"/>
    <property type="evidence" value="ECO:0007669"/>
    <property type="project" value="UniProtKB-ARBA"/>
</dbReference>
<dbReference type="GO" id="GO:0005765">
    <property type="term" value="C:lysosomal membrane"/>
    <property type="evidence" value="ECO:0007669"/>
    <property type="project" value="UniProtKB-ARBA"/>
</dbReference>
<dbReference type="GO" id="GO:0030496">
    <property type="term" value="C:midbody"/>
    <property type="evidence" value="ECO:0007669"/>
    <property type="project" value="UniProtKB-ARBA"/>
</dbReference>
<dbReference type="GO" id="GO:0032585">
    <property type="term" value="C:multivesicular body membrane"/>
    <property type="evidence" value="ECO:0007669"/>
    <property type="project" value="UniProtKB-ARBA"/>
</dbReference>
<dbReference type="GO" id="GO:0005643">
    <property type="term" value="C:nuclear pore"/>
    <property type="evidence" value="ECO:0007669"/>
    <property type="project" value="UniProtKB-ARBA"/>
</dbReference>
<dbReference type="GO" id="GO:0097352">
    <property type="term" value="P:autophagosome maturation"/>
    <property type="evidence" value="ECO:0007669"/>
    <property type="project" value="UniProtKB-ARBA"/>
</dbReference>
<dbReference type="GO" id="GO:1902774">
    <property type="term" value="P:late endosome to lysosome transport"/>
    <property type="evidence" value="ECO:0007669"/>
    <property type="project" value="UniProtKB-ARBA"/>
</dbReference>
<dbReference type="GO" id="GO:0061952">
    <property type="term" value="P:midbody abscission"/>
    <property type="evidence" value="ECO:0007669"/>
    <property type="project" value="UniProtKB-ARBA"/>
</dbReference>
<dbReference type="GO" id="GO:0007080">
    <property type="term" value="P:mitotic metaphase chromosome alignment"/>
    <property type="evidence" value="ECO:0007669"/>
    <property type="project" value="UniProtKB-ARBA"/>
</dbReference>
<dbReference type="GO" id="GO:0071985">
    <property type="term" value="P:multivesicular body sorting pathway"/>
    <property type="evidence" value="ECO:0007669"/>
    <property type="project" value="UniProtKB-ARBA"/>
</dbReference>
<dbReference type="GO" id="GO:0031468">
    <property type="term" value="P:nuclear membrane reassembly"/>
    <property type="evidence" value="ECO:0007669"/>
    <property type="project" value="UniProtKB-ARBA"/>
</dbReference>
<dbReference type="GO" id="GO:0001778">
    <property type="term" value="P:plasma membrane repair"/>
    <property type="evidence" value="ECO:0007669"/>
    <property type="project" value="UniProtKB-ARBA"/>
</dbReference>
<dbReference type="GO" id="GO:0015031">
    <property type="term" value="P:protein transport"/>
    <property type="evidence" value="ECO:0007669"/>
    <property type="project" value="UniProtKB-KW"/>
</dbReference>
<dbReference type="GO" id="GO:1901673">
    <property type="term" value="P:regulation of mitotic spindle assembly"/>
    <property type="evidence" value="ECO:0007669"/>
    <property type="project" value="UniProtKB-ARBA"/>
</dbReference>
<dbReference type="GO" id="GO:0043162">
    <property type="term" value="P:ubiquitin-dependent protein catabolic process via the multivesicular body sorting pathway"/>
    <property type="evidence" value="ECO:0007669"/>
    <property type="project" value="UniProtKB-ARBA"/>
</dbReference>
<dbReference type="GO" id="GO:0046761">
    <property type="term" value="P:viral budding from plasma membrane"/>
    <property type="evidence" value="ECO:0007669"/>
    <property type="project" value="UniProtKB-ARBA"/>
</dbReference>
<dbReference type="GO" id="GO:0039702">
    <property type="term" value="P:viral budding via host ESCRT complex"/>
    <property type="evidence" value="ECO:0007669"/>
    <property type="project" value="UniProtKB-ARBA"/>
</dbReference>
<dbReference type="Gene3D" id="6.10.140.1230">
    <property type="match status" value="1"/>
</dbReference>
<dbReference type="InterPro" id="IPR005024">
    <property type="entry name" value="Snf7_fam"/>
</dbReference>
<dbReference type="PANTHER" id="PTHR10476">
    <property type="entry name" value="CHARGED MULTIVESICULAR BODY PROTEIN"/>
    <property type="match status" value="1"/>
</dbReference>
<dbReference type="Pfam" id="PF03357">
    <property type="entry name" value="Snf7"/>
    <property type="match status" value="1"/>
</dbReference>
<protein>
    <recommendedName>
        <fullName>Charged multivesicular body protein 2b</fullName>
    </recommendedName>
    <alternativeName>
        <fullName>Chromatin-modifying protein 2b</fullName>
        <shortName>CHMP2b</shortName>
    </alternativeName>
</protein>
<feature type="initiator methionine" description="Removed" evidence="2">
    <location>
        <position position="1"/>
    </location>
</feature>
<feature type="chain" id="PRO_0000211471" description="Charged multivesicular body protein 2b">
    <location>
        <begin position="2"/>
        <end position="213"/>
    </location>
</feature>
<feature type="region of interest" description="Disordered" evidence="4">
    <location>
        <begin position="179"/>
        <end position="199"/>
    </location>
</feature>
<feature type="coiled-coil region" evidence="3">
    <location>
        <begin position="25"/>
        <end position="55"/>
    </location>
</feature>
<feature type="short sequence motif" description="MIT-interacting motif">
    <location>
        <begin position="201"/>
        <end position="211"/>
    </location>
</feature>
<feature type="compositionally biased region" description="Low complexity" evidence="4">
    <location>
        <begin position="179"/>
        <end position="194"/>
    </location>
</feature>
<feature type="modified residue" description="N-acetylalanine" evidence="2">
    <location>
        <position position="2"/>
    </location>
</feature>
<feature type="modified residue" description="Phosphoserine" evidence="2">
    <location>
        <position position="199"/>
    </location>
</feature>
<keyword id="KW-0007">Acetylation</keyword>
<keyword id="KW-0175">Coiled coil</keyword>
<keyword id="KW-0963">Cytoplasm</keyword>
<keyword id="KW-0967">Endosome</keyword>
<keyword id="KW-0472">Membrane</keyword>
<keyword id="KW-0597">Phosphoprotein</keyword>
<keyword id="KW-0653">Protein transport</keyword>
<keyword id="KW-1185">Reference proteome</keyword>
<keyword id="KW-0813">Transport</keyword>
<sequence>MASLFKKKTVDDVIKEQNRELRGTQRAIIRDRAALEKQEKQLELEIKKMAKIGNKEACKVLAKQLVHLRKQKTRTFAVSSKVTSMSTQTKVMNSQMKMAGAMSTTAKTMQAVNKKMDPQKTLQTMQNFQKENMKMEMTEEMINDTLDDIFDGSDDEEESQDIVNQVLDEIGIEISGKMAKAPSAARSLPSASTSKATISDEEIERQLKALGVD</sequence>
<organism>
    <name type="scientific">Pongo abelii</name>
    <name type="common">Sumatran orangutan</name>
    <name type="synonym">Pongo pygmaeus abelii</name>
    <dbReference type="NCBI Taxonomy" id="9601"/>
    <lineage>
        <taxon>Eukaryota</taxon>
        <taxon>Metazoa</taxon>
        <taxon>Chordata</taxon>
        <taxon>Craniata</taxon>
        <taxon>Vertebrata</taxon>
        <taxon>Euteleostomi</taxon>
        <taxon>Mammalia</taxon>
        <taxon>Eutheria</taxon>
        <taxon>Euarchontoglires</taxon>
        <taxon>Primates</taxon>
        <taxon>Haplorrhini</taxon>
        <taxon>Catarrhini</taxon>
        <taxon>Hominidae</taxon>
        <taxon>Pongo</taxon>
    </lineage>
</organism>
<gene>
    <name type="primary">CHMP2B</name>
</gene>
<evidence type="ECO:0000250" key="1"/>
<evidence type="ECO:0000250" key="2">
    <source>
        <dbReference type="UniProtKB" id="Q9UQN3"/>
    </source>
</evidence>
<evidence type="ECO:0000255" key="3"/>
<evidence type="ECO:0000256" key="4">
    <source>
        <dbReference type="SAM" id="MobiDB-lite"/>
    </source>
</evidence>
<evidence type="ECO:0000305" key="5"/>
<name>CHM2B_PONAB</name>
<proteinExistence type="evidence at transcript level"/>
<comment type="function">
    <text evidence="1">Probable core component of the endosomal sorting required for transport complex III (ESCRT-III) which is involved in multivesicular bodies (MVBs) formation and sorting of endosomal cargo proteins into MVBs. MVBs contain intraluminal vesicles (ILVs) that are generated by invagination and scission from the limiting membrane of the endosome and mostly are delivered to lysosomes enabling degradation of membrane proteins, such as stimulated growth factor receptors, lysosomal enzymes and lipids. The MVB pathway appears to require the sequential function of ESCRT-O, -I,-II and -III complexes. ESCRT-III proteins mostly dissociate from the invaginating membrane before the ILV is released. The ESCRT machinery also functions in topologically equivalent membrane fission events, such as the terminal stages of cytokinesis and the budding of enveloped viruses (lentiviruses). ESCRT-III proteins are believed to mediate the necessary vesicle extrusion and/or membrane fission activities, possibly in conjunction with the AAA ATPase VPS4 (By similarity).</text>
</comment>
<comment type="subunit">
    <text evidence="1">Probable core component of the endosomal sorting required for transport complex III (ESCRT-III). ESCRT-III components are thought to multimerize to form a flat lattice on the perimeter membrane of the endosome. Several assembly forms of ESCRT-III may exist that interact and act sequentially. Interacts with CHMP2A. Interacts with VPS4A. Interacts with VPS4B; the interaction is direct (By similarity).</text>
</comment>
<comment type="subcellular location">
    <subcellularLocation>
        <location evidence="1">Cytoplasm</location>
        <location evidence="1">Cytosol</location>
    </subcellularLocation>
    <subcellularLocation>
        <location evidence="1">Late endosome membrane</location>
        <topology evidence="1">Peripheral membrane protein</topology>
    </subcellularLocation>
</comment>
<comment type="similarity">
    <text evidence="5">Belongs to the SNF7 family.</text>
</comment>